<accession>Q4UKW0</accession>
<dbReference type="EC" id="3.6.1.1" evidence="1"/>
<dbReference type="EMBL" id="CP000053">
    <property type="protein sequence ID" value="AAY61813.1"/>
    <property type="status" value="ALT_INIT"/>
    <property type="molecule type" value="Genomic_DNA"/>
</dbReference>
<dbReference type="SMR" id="Q4UKW0"/>
<dbReference type="STRING" id="315456.RF_0962"/>
<dbReference type="KEGG" id="rfe:RF_0962"/>
<dbReference type="eggNOG" id="COG0221">
    <property type="taxonomic scope" value="Bacteria"/>
</dbReference>
<dbReference type="HOGENOM" id="CLU_073198_1_0_5"/>
<dbReference type="OrthoDB" id="5187599at2"/>
<dbReference type="Proteomes" id="UP000008548">
    <property type="component" value="Chromosome"/>
</dbReference>
<dbReference type="GO" id="GO:0005737">
    <property type="term" value="C:cytoplasm"/>
    <property type="evidence" value="ECO:0007669"/>
    <property type="project" value="UniProtKB-SubCell"/>
</dbReference>
<dbReference type="GO" id="GO:0004427">
    <property type="term" value="F:inorganic diphosphate phosphatase activity"/>
    <property type="evidence" value="ECO:0007669"/>
    <property type="project" value="UniProtKB-UniRule"/>
</dbReference>
<dbReference type="GO" id="GO:0000287">
    <property type="term" value="F:magnesium ion binding"/>
    <property type="evidence" value="ECO:0007669"/>
    <property type="project" value="UniProtKB-UniRule"/>
</dbReference>
<dbReference type="GO" id="GO:0006796">
    <property type="term" value="P:phosphate-containing compound metabolic process"/>
    <property type="evidence" value="ECO:0007669"/>
    <property type="project" value="InterPro"/>
</dbReference>
<dbReference type="CDD" id="cd00412">
    <property type="entry name" value="pyrophosphatase"/>
    <property type="match status" value="1"/>
</dbReference>
<dbReference type="FunFam" id="3.90.80.10:FF:000003">
    <property type="entry name" value="Inorganic pyrophosphatase"/>
    <property type="match status" value="1"/>
</dbReference>
<dbReference type="Gene3D" id="3.90.80.10">
    <property type="entry name" value="Inorganic pyrophosphatase"/>
    <property type="match status" value="1"/>
</dbReference>
<dbReference type="HAMAP" id="MF_00209">
    <property type="entry name" value="Inorganic_PPase"/>
    <property type="match status" value="1"/>
</dbReference>
<dbReference type="InterPro" id="IPR008162">
    <property type="entry name" value="Pyrophosphatase"/>
</dbReference>
<dbReference type="InterPro" id="IPR036649">
    <property type="entry name" value="Pyrophosphatase_sf"/>
</dbReference>
<dbReference type="NCBIfam" id="NF002317">
    <property type="entry name" value="PRK01250.1"/>
    <property type="match status" value="1"/>
</dbReference>
<dbReference type="PANTHER" id="PTHR10286">
    <property type="entry name" value="INORGANIC PYROPHOSPHATASE"/>
    <property type="match status" value="1"/>
</dbReference>
<dbReference type="Pfam" id="PF00719">
    <property type="entry name" value="Pyrophosphatase"/>
    <property type="match status" value="1"/>
</dbReference>
<dbReference type="SUPFAM" id="SSF50324">
    <property type="entry name" value="Inorganic pyrophosphatase"/>
    <property type="match status" value="1"/>
</dbReference>
<dbReference type="PROSITE" id="PS00387">
    <property type="entry name" value="PPASE"/>
    <property type="match status" value="1"/>
</dbReference>
<reference key="1">
    <citation type="journal article" date="2005" name="PLoS Biol.">
        <title>The genome sequence of Rickettsia felis identifies the first putative conjugative plasmid in an obligate intracellular parasite.</title>
        <authorList>
            <person name="Ogata H."/>
            <person name="Renesto P."/>
            <person name="Audic S."/>
            <person name="Robert C."/>
            <person name="Blanc G."/>
            <person name="Fournier P.-E."/>
            <person name="Parinello H."/>
            <person name="Claverie J.-M."/>
            <person name="Raoult D."/>
        </authorList>
    </citation>
    <scope>NUCLEOTIDE SEQUENCE [LARGE SCALE GENOMIC DNA]</scope>
    <source>
        <strain>ATCC VR-1525 / URRWXCal2</strain>
    </source>
</reference>
<keyword id="KW-0963">Cytoplasm</keyword>
<keyword id="KW-0378">Hydrolase</keyword>
<keyword id="KW-0460">Magnesium</keyword>
<keyword id="KW-0479">Metal-binding</keyword>
<sequence length="173" mass="19551">MFIDKIKAKANNDEINVIIEIPMNIGPIKYEFDKESGAVFVDRFMQTTMSYPCNYGFIPHTLSNDGDPVDVLVVAHHPVVPGSVIKCRAVGVLMMEDESGLDEKIIAVPTSKLDITFDHIKELDDLCEMLKKRIVHFFEHYKDLEKGKWVKVTGWENKAKANALINEGIDRAS</sequence>
<evidence type="ECO:0000255" key="1">
    <source>
        <dbReference type="HAMAP-Rule" id="MF_00209"/>
    </source>
</evidence>
<evidence type="ECO:0000305" key="2"/>
<name>IPYR_RICFE</name>
<organism>
    <name type="scientific">Rickettsia felis (strain ATCC VR-1525 / URRWXCal2)</name>
    <name type="common">Rickettsia azadi</name>
    <dbReference type="NCBI Taxonomy" id="315456"/>
    <lineage>
        <taxon>Bacteria</taxon>
        <taxon>Pseudomonadati</taxon>
        <taxon>Pseudomonadota</taxon>
        <taxon>Alphaproteobacteria</taxon>
        <taxon>Rickettsiales</taxon>
        <taxon>Rickettsiaceae</taxon>
        <taxon>Rickettsieae</taxon>
        <taxon>Rickettsia</taxon>
        <taxon>spotted fever group</taxon>
    </lineage>
</organism>
<gene>
    <name evidence="1" type="primary">ppa</name>
    <name type="ordered locus">RF_0962</name>
</gene>
<proteinExistence type="inferred from homology"/>
<comment type="function">
    <text evidence="1">Catalyzes the hydrolysis of inorganic pyrophosphate (PPi) forming two phosphate ions.</text>
</comment>
<comment type="catalytic activity">
    <reaction evidence="1">
        <text>diphosphate + H2O = 2 phosphate + H(+)</text>
        <dbReference type="Rhea" id="RHEA:24576"/>
        <dbReference type="ChEBI" id="CHEBI:15377"/>
        <dbReference type="ChEBI" id="CHEBI:15378"/>
        <dbReference type="ChEBI" id="CHEBI:33019"/>
        <dbReference type="ChEBI" id="CHEBI:43474"/>
        <dbReference type="EC" id="3.6.1.1"/>
    </reaction>
</comment>
<comment type="cofactor">
    <cofactor evidence="1">
        <name>Mg(2+)</name>
        <dbReference type="ChEBI" id="CHEBI:18420"/>
    </cofactor>
</comment>
<comment type="subunit">
    <text evidence="1">Homohexamer.</text>
</comment>
<comment type="subcellular location">
    <subcellularLocation>
        <location evidence="1">Cytoplasm</location>
    </subcellularLocation>
</comment>
<comment type="similarity">
    <text evidence="1">Belongs to the PPase family.</text>
</comment>
<comment type="sequence caution" evidence="2">
    <conflict type="erroneous initiation">
        <sequence resource="EMBL-CDS" id="AAY61813"/>
    </conflict>
</comment>
<protein>
    <recommendedName>
        <fullName evidence="1">Inorganic pyrophosphatase</fullName>
        <ecNumber evidence="1">3.6.1.1</ecNumber>
    </recommendedName>
    <alternativeName>
        <fullName evidence="1">Pyrophosphate phospho-hydrolase</fullName>
        <shortName evidence="1">PPase</shortName>
    </alternativeName>
</protein>
<feature type="chain" id="PRO_0000278036" description="Inorganic pyrophosphatase">
    <location>
        <begin position="1"/>
        <end position="173"/>
    </location>
</feature>
<feature type="binding site" evidence="1">
    <location>
        <position position="29"/>
    </location>
    <ligand>
        <name>substrate</name>
    </ligand>
</feature>
<feature type="binding site" evidence="1">
    <location>
        <position position="43"/>
    </location>
    <ligand>
        <name>substrate</name>
    </ligand>
</feature>
<feature type="binding site" evidence="1">
    <location>
        <position position="55"/>
    </location>
    <ligand>
        <name>substrate</name>
    </ligand>
</feature>
<feature type="binding site" evidence="1">
    <location>
        <position position="65"/>
    </location>
    <ligand>
        <name>Mg(2+)</name>
        <dbReference type="ChEBI" id="CHEBI:18420"/>
        <label>1</label>
    </ligand>
</feature>
<feature type="binding site" evidence="1">
    <location>
        <position position="70"/>
    </location>
    <ligand>
        <name>Mg(2+)</name>
        <dbReference type="ChEBI" id="CHEBI:18420"/>
        <label>1</label>
    </ligand>
</feature>
<feature type="binding site" evidence="1">
    <location>
        <position position="70"/>
    </location>
    <ligand>
        <name>Mg(2+)</name>
        <dbReference type="ChEBI" id="CHEBI:18420"/>
        <label>2</label>
    </ligand>
</feature>
<feature type="binding site" evidence="1">
    <location>
        <position position="102"/>
    </location>
    <ligand>
        <name>Mg(2+)</name>
        <dbReference type="ChEBI" id="CHEBI:18420"/>
        <label>1</label>
    </ligand>
</feature>
<feature type="binding site" evidence="1">
    <location>
        <position position="141"/>
    </location>
    <ligand>
        <name>substrate</name>
    </ligand>
</feature>